<feature type="chain" id="PRO_1000014027" description="Glucose-6-phosphate isomerase">
    <location>
        <begin position="1"/>
        <end position="449"/>
    </location>
</feature>
<feature type="active site" description="Proton donor" evidence="1">
    <location>
        <position position="291"/>
    </location>
</feature>
<feature type="active site" evidence="1">
    <location>
        <position position="312"/>
    </location>
</feature>
<feature type="active site" evidence="1">
    <location>
        <position position="426"/>
    </location>
</feature>
<evidence type="ECO:0000255" key="1">
    <source>
        <dbReference type="HAMAP-Rule" id="MF_00473"/>
    </source>
</evidence>
<comment type="function">
    <text evidence="1">Catalyzes the reversible isomerization of glucose-6-phosphate to fructose-6-phosphate.</text>
</comment>
<comment type="catalytic activity">
    <reaction evidence="1">
        <text>alpha-D-glucose 6-phosphate = beta-D-fructose 6-phosphate</text>
        <dbReference type="Rhea" id="RHEA:11816"/>
        <dbReference type="ChEBI" id="CHEBI:57634"/>
        <dbReference type="ChEBI" id="CHEBI:58225"/>
        <dbReference type="EC" id="5.3.1.9"/>
    </reaction>
</comment>
<comment type="pathway">
    <text evidence="1">Carbohydrate biosynthesis; gluconeogenesis.</text>
</comment>
<comment type="pathway">
    <text evidence="1">Carbohydrate degradation; glycolysis; D-glyceraldehyde 3-phosphate and glycerone phosphate from D-glucose: step 2/4.</text>
</comment>
<comment type="subcellular location">
    <subcellularLocation>
        <location evidence="1">Cytoplasm</location>
    </subcellularLocation>
</comment>
<comment type="similarity">
    <text evidence="1">Belongs to the GPI family.</text>
</comment>
<keyword id="KW-0963">Cytoplasm</keyword>
<keyword id="KW-0312">Gluconeogenesis</keyword>
<keyword id="KW-0324">Glycolysis</keyword>
<keyword id="KW-0413">Isomerase</keyword>
<name>G6PI_STRPG</name>
<proteinExistence type="inferred from homology"/>
<accession>A2RCD9</accession>
<organism>
    <name type="scientific">Streptococcus pyogenes serotype M5 (strain Manfredo)</name>
    <dbReference type="NCBI Taxonomy" id="160491"/>
    <lineage>
        <taxon>Bacteria</taxon>
        <taxon>Bacillati</taxon>
        <taxon>Bacillota</taxon>
        <taxon>Bacilli</taxon>
        <taxon>Lactobacillales</taxon>
        <taxon>Streptococcaceae</taxon>
        <taxon>Streptococcus</taxon>
    </lineage>
</organism>
<protein>
    <recommendedName>
        <fullName evidence="1">Glucose-6-phosphate isomerase</fullName>
        <shortName evidence="1">GPI</shortName>
        <ecNumber evidence="1">5.3.1.9</ecNumber>
    </recommendedName>
    <alternativeName>
        <fullName evidence="1">Phosphoglucose isomerase</fullName>
        <shortName evidence="1">PGI</shortName>
    </alternativeName>
    <alternativeName>
        <fullName evidence="1">Phosphohexose isomerase</fullName>
        <shortName evidence="1">PHI</shortName>
    </alternativeName>
</protein>
<gene>
    <name evidence="1" type="primary">pgi</name>
    <name type="ordered locus">SpyM50167</name>
</gene>
<sequence>MSHITFDYSKVLESFAGQHEIDFLQGQVTEADKLLREGTGPGSDFLGWLDLPENYDKEEFARILTAAEKIKSDSEVLVVIGIGGSYLGAKAAIDFLNHHFANLQTAKERKAPQILYAGNSISSTYLADLVEYVQDKEFSVNVISKSGTTTEPAIAFRVFKELLVKKYGQEEANKRIYATTDKVKGAVKVEADANNWETFVVPDNVGGRFSVLTAVGLLPIAASGADITALMEGANAARKDLSSDKISENIAYQYAAVRNVLYRKGYITEILANYEPSLQYFGEWWKQLAGESEGKDQKGIYPTSANFSTDLHSLGQFIQEGYRNLFETVIRVDNPRKNVIIPELAEDLDGLGYLQGKDVDFVNKKATDGVLLAHTDGGVPNMFVTLPAQDEFTLGYTIYFFELAIAVSGYMNAVNPFDQPGVEAYKRNMFALLGKPGFEALSAELNARL</sequence>
<dbReference type="EC" id="5.3.1.9" evidence="1"/>
<dbReference type="EMBL" id="AM295007">
    <property type="protein sequence ID" value="CAM29511.1"/>
    <property type="molecule type" value="Genomic_DNA"/>
</dbReference>
<dbReference type="RefSeq" id="WP_011888573.1">
    <property type="nucleotide sequence ID" value="NC_009332.1"/>
</dbReference>
<dbReference type="SMR" id="A2RCD9"/>
<dbReference type="KEGG" id="spf:SpyM50167"/>
<dbReference type="HOGENOM" id="CLU_037303_0_1_9"/>
<dbReference type="UniPathway" id="UPA00109">
    <property type="reaction ID" value="UER00181"/>
</dbReference>
<dbReference type="UniPathway" id="UPA00138"/>
<dbReference type="GO" id="GO:0005829">
    <property type="term" value="C:cytosol"/>
    <property type="evidence" value="ECO:0007669"/>
    <property type="project" value="TreeGrafter"/>
</dbReference>
<dbReference type="GO" id="GO:0097367">
    <property type="term" value="F:carbohydrate derivative binding"/>
    <property type="evidence" value="ECO:0007669"/>
    <property type="project" value="InterPro"/>
</dbReference>
<dbReference type="GO" id="GO:0004347">
    <property type="term" value="F:glucose-6-phosphate isomerase activity"/>
    <property type="evidence" value="ECO:0007669"/>
    <property type="project" value="UniProtKB-UniRule"/>
</dbReference>
<dbReference type="GO" id="GO:0048029">
    <property type="term" value="F:monosaccharide binding"/>
    <property type="evidence" value="ECO:0007669"/>
    <property type="project" value="TreeGrafter"/>
</dbReference>
<dbReference type="GO" id="GO:0006094">
    <property type="term" value="P:gluconeogenesis"/>
    <property type="evidence" value="ECO:0007669"/>
    <property type="project" value="UniProtKB-UniRule"/>
</dbReference>
<dbReference type="GO" id="GO:0051156">
    <property type="term" value="P:glucose 6-phosphate metabolic process"/>
    <property type="evidence" value="ECO:0007669"/>
    <property type="project" value="TreeGrafter"/>
</dbReference>
<dbReference type="GO" id="GO:0006096">
    <property type="term" value="P:glycolytic process"/>
    <property type="evidence" value="ECO:0007669"/>
    <property type="project" value="UniProtKB-UniRule"/>
</dbReference>
<dbReference type="CDD" id="cd05015">
    <property type="entry name" value="SIS_PGI_1"/>
    <property type="match status" value="1"/>
</dbReference>
<dbReference type="CDD" id="cd05016">
    <property type="entry name" value="SIS_PGI_2"/>
    <property type="match status" value="1"/>
</dbReference>
<dbReference type="FunFam" id="3.40.50.10490:FF:000015">
    <property type="entry name" value="Glucose-6-phosphate isomerase"/>
    <property type="match status" value="1"/>
</dbReference>
<dbReference type="FunFam" id="3.40.50.10490:FF:000016">
    <property type="entry name" value="Glucose-6-phosphate isomerase"/>
    <property type="match status" value="1"/>
</dbReference>
<dbReference type="Gene3D" id="3.40.50.10490">
    <property type="entry name" value="Glucose-6-phosphate isomerase like protein, domain 1"/>
    <property type="match status" value="2"/>
</dbReference>
<dbReference type="HAMAP" id="MF_00473">
    <property type="entry name" value="G6P_isomerase"/>
    <property type="match status" value="1"/>
</dbReference>
<dbReference type="InterPro" id="IPR001672">
    <property type="entry name" value="G6P_Isomerase"/>
</dbReference>
<dbReference type="InterPro" id="IPR018189">
    <property type="entry name" value="Phosphoglucose_isomerase_CS"/>
</dbReference>
<dbReference type="InterPro" id="IPR046348">
    <property type="entry name" value="SIS_dom_sf"/>
</dbReference>
<dbReference type="InterPro" id="IPR035476">
    <property type="entry name" value="SIS_PGI_1"/>
</dbReference>
<dbReference type="InterPro" id="IPR035482">
    <property type="entry name" value="SIS_PGI_2"/>
</dbReference>
<dbReference type="NCBIfam" id="NF010697">
    <property type="entry name" value="PRK14097.1"/>
    <property type="match status" value="1"/>
</dbReference>
<dbReference type="PANTHER" id="PTHR11469">
    <property type="entry name" value="GLUCOSE-6-PHOSPHATE ISOMERASE"/>
    <property type="match status" value="1"/>
</dbReference>
<dbReference type="PANTHER" id="PTHR11469:SF1">
    <property type="entry name" value="GLUCOSE-6-PHOSPHATE ISOMERASE"/>
    <property type="match status" value="1"/>
</dbReference>
<dbReference type="Pfam" id="PF00342">
    <property type="entry name" value="PGI"/>
    <property type="match status" value="1"/>
</dbReference>
<dbReference type="PRINTS" id="PR00662">
    <property type="entry name" value="G6PISOMERASE"/>
</dbReference>
<dbReference type="SUPFAM" id="SSF53697">
    <property type="entry name" value="SIS domain"/>
    <property type="match status" value="1"/>
</dbReference>
<dbReference type="PROSITE" id="PS00765">
    <property type="entry name" value="P_GLUCOSE_ISOMERASE_1"/>
    <property type="match status" value="1"/>
</dbReference>
<dbReference type="PROSITE" id="PS00174">
    <property type="entry name" value="P_GLUCOSE_ISOMERASE_2"/>
    <property type="match status" value="1"/>
</dbReference>
<dbReference type="PROSITE" id="PS51463">
    <property type="entry name" value="P_GLUCOSE_ISOMERASE_3"/>
    <property type="match status" value="1"/>
</dbReference>
<reference key="1">
    <citation type="journal article" date="2007" name="J. Bacteriol.">
        <title>Complete genome of acute rheumatic fever-associated serotype M5 Streptococcus pyogenes strain Manfredo.</title>
        <authorList>
            <person name="Holden M.T.G."/>
            <person name="Scott A."/>
            <person name="Cherevach I."/>
            <person name="Chillingworth T."/>
            <person name="Churcher C."/>
            <person name="Cronin A."/>
            <person name="Dowd L."/>
            <person name="Feltwell T."/>
            <person name="Hamlin N."/>
            <person name="Holroyd S."/>
            <person name="Jagels K."/>
            <person name="Moule S."/>
            <person name="Mungall K."/>
            <person name="Quail M.A."/>
            <person name="Price C."/>
            <person name="Rabbinowitsch E."/>
            <person name="Sharp S."/>
            <person name="Skelton J."/>
            <person name="Whitehead S."/>
            <person name="Barrell B.G."/>
            <person name="Kehoe M."/>
            <person name="Parkhill J."/>
        </authorList>
    </citation>
    <scope>NUCLEOTIDE SEQUENCE [LARGE SCALE GENOMIC DNA]</scope>
    <source>
        <strain>Manfredo</strain>
    </source>
</reference>